<comment type="function">
    <text>Inhibitor of trypsin and chymotrypsin.</text>
</comment>
<comment type="subcellular location">
    <subcellularLocation>
        <location>Secreted</location>
    </subcellularLocation>
</comment>
<keyword id="KW-0903">Direct protein sequencing</keyword>
<keyword id="KW-1015">Disulfide bond</keyword>
<keyword id="KW-0646">Protease inhibitor</keyword>
<keyword id="KW-0964">Secreted</keyword>
<keyword id="KW-0722">Serine protease inhibitor</keyword>
<protein>
    <recommendedName>
        <fullName>Proteinase inhibitor</fullName>
    </recommendedName>
    <alternativeName>
        <fullName>BPI-type</fullName>
    </alternativeName>
</protein>
<sequence length="61" mass="6825">TERGFLDCTSPPVTGPCRAGFKRYNYNTRTKQCEPFKYGGCKGNGNRYKSEQDCLDACSGF</sequence>
<proteinExistence type="evidence at protein level"/>
<reference key="1">
    <citation type="journal article" date="1987" name="J. Biochem.">
        <title>Purification and amino acid sequence of Kunitz-type protease inhibitor found in the hemocytes of horseshoe crab (Tachypleus tridentatus).</title>
        <authorList>
            <person name="Nakamura T."/>
            <person name="Hirai T."/>
            <person name="Tokunaga F."/>
            <person name="Kawabata S."/>
            <person name="Iwanaga S."/>
        </authorList>
    </citation>
    <scope>PROTEIN SEQUENCE</scope>
    <source>
        <tissue>Hemocyte</tissue>
    </source>
</reference>
<organism>
    <name type="scientific">Tachypleus tridentatus</name>
    <name type="common">Japanese horseshoe crab</name>
    <dbReference type="NCBI Taxonomy" id="6853"/>
    <lineage>
        <taxon>Eukaryota</taxon>
        <taxon>Metazoa</taxon>
        <taxon>Ecdysozoa</taxon>
        <taxon>Arthropoda</taxon>
        <taxon>Chelicerata</taxon>
        <taxon>Merostomata</taxon>
        <taxon>Xiphosura</taxon>
        <taxon>Limulidae</taxon>
        <taxon>Tachypleus</taxon>
    </lineage>
</organism>
<evidence type="ECO:0000250" key="1"/>
<evidence type="ECO:0000255" key="2">
    <source>
        <dbReference type="PROSITE-ProRule" id="PRU00031"/>
    </source>
</evidence>
<accession>P16044</accession>
<name>IBPI_TACTR</name>
<dbReference type="PIR" id="A26923">
    <property type="entry name" value="TIHCBP"/>
</dbReference>
<dbReference type="SMR" id="P16044"/>
<dbReference type="MEROPS" id="I02.017"/>
<dbReference type="GO" id="GO:0005615">
    <property type="term" value="C:extracellular space"/>
    <property type="evidence" value="ECO:0007669"/>
    <property type="project" value="TreeGrafter"/>
</dbReference>
<dbReference type="GO" id="GO:0004867">
    <property type="term" value="F:serine-type endopeptidase inhibitor activity"/>
    <property type="evidence" value="ECO:0007669"/>
    <property type="project" value="UniProtKB-KW"/>
</dbReference>
<dbReference type="GO" id="GO:0044562">
    <property type="term" value="P:envenomation resulting in negative regulation of voltage-gated potassium channel activity in another organism"/>
    <property type="evidence" value="ECO:0007669"/>
    <property type="project" value="UniProtKB-ARBA"/>
</dbReference>
<dbReference type="Gene3D" id="4.10.410.10">
    <property type="entry name" value="Pancreatic trypsin inhibitor Kunitz domain"/>
    <property type="match status" value="1"/>
</dbReference>
<dbReference type="InterPro" id="IPR002223">
    <property type="entry name" value="Kunitz_BPTI"/>
</dbReference>
<dbReference type="InterPro" id="IPR036880">
    <property type="entry name" value="Kunitz_BPTI_sf"/>
</dbReference>
<dbReference type="InterPro" id="IPR020901">
    <property type="entry name" value="Prtase_inh_Kunz-CS"/>
</dbReference>
<dbReference type="InterPro" id="IPR050098">
    <property type="entry name" value="TFPI/VKTCI-like"/>
</dbReference>
<dbReference type="PANTHER" id="PTHR10083:SF374">
    <property type="entry name" value="BPTI_KUNITZ INHIBITOR DOMAIN-CONTAINING PROTEIN"/>
    <property type="match status" value="1"/>
</dbReference>
<dbReference type="PANTHER" id="PTHR10083">
    <property type="entry name" value="KUNITZ-TYPE PROTEASE INHIBITOR-RELATED"/>
    <property type="match status" value="1"/>
</dbReference>
<dbReference type="Pfam" id="PF00014">
    <property type="entry name" value="Kunitz_BPTI"/>
    <property type="match status" value="1"/>
</dbReference>
<dbReference type="PRINTS" id="PR00759">
    <property type="entry name" value="BASICPTASE"/>
</dbReference>
<dbReference type="SMART" id="SM00131">
    <property type="entry name" value="KU"/>
    <property type="match status" value="1"/>
</dbReference>
<dbReference type="SUPFAM" id="SSF57362">
    <property type="entry name" value="BPTI-like"/>
    <property type="match status" value="1"/>
</dbReference>
<dbReference type="PROSITE" id="PS00280">
    <property type="entry name" value="BPTI_KUNITZ_1"/>
    <property type="match status" value="1"/>
</dbReference>
<dbReference type="PROSITE" id="PS50279">
    <property type="entry name" value="BPTI_KUNITZ_2"/>
    <property type="match status" value="1"/>
</dbReference>
<feature type="chain" id="PRO_0000155411" description="Proteinase inhibitor">
    <location>
        <begin position="1"/>
        <end position="61"/>
    </location>
</feature>
<feature type="domain" description="BPTI/Kunitz inhibitor" evidence="2">
    <location>
        <begin position="8"/>
        <end position="58"/>
    </location>
</feature>
<feature type="site" description="Reactive bond" evidence="1">
    <location>
        <begin position="18"/>
        <end position="19"/>
    </location>
</feature>
<feature type="disulfide bond" evidence="2">
    <location>
        <begin position="8"/>
        <end position="58"/>
    </location>
</feature>
<feature type="disulfide bond" evidence="2">
    <location>
        <begin position="17"/>
        <end position="41"/>
    </location>
</feature>
<feature type="disulfide bond" evidence="2">
    <location>
        <begin position="33"/>
        <end position="54"/>
    </location>
</feature>